<protein>
    <recommendedName>
        <fullName evidence="1">D-tagatose-1,6-bisphosphate aldolase subunit GatY</fullName>
        <shortName evidence="1">TBPA</shortName>
        <shortName evidence="1">TagBP aldolase</shortName>
        <ecNumber evidence="1">4.1.2.40</ecNumber>
    </recommendedName>
    <alternativeName>
        <fullName evidence="1">D-tagatose-bisphosphate aldolase class II</fullName>
    </alternativeName>
    <alternativeName>
        <fullName evidence="1">Tagatose-bisphosphate aldolase</fullName>
    </alternativeName>
</protein>
<dbReference type="EC" id="4.1.2.40" evidence="1"/>
<dbReference type="EMBL" id="CP000970">
    <property type="protein sequence ID" value="ACB17530.1"/>
    <property type="molecule type" value="Genomic_DNA"/>
</dbReference>
<dbReference type="RefSeq" id="WP_000289803.1">
    <property type="nucleotide sequence ID" value="NC_010498.1"/>
</dbReference>
<dbReference type="SMR" id="B1LN92"/>
<dbReference type="KEGG" id="ecm:EcSMS35_0968"/>
<dbReference type="HOGENOM" id="CLU_040088_0_1_6"/>
<dbReference type="UniPathway" id="UPA00704">
    <property type="reaction ID" value="UER00716"/>
</dbReference>
<dbReference type="Proteomes" id="UP000007011">
    <property type="component" value="Chromosome"/>
</dbReference>
<dbReference type="GO" id="GO:0005829">
    <property type="term" value="C:cytosol"/>
    <property type="evidence" value="ECO:0007669"/>
    <property type="project" value="TreeGrafter"/>
</dbReference>
<dbReference type="GO" id="GO:0009025">
    <property type="term" value="F:tagatose-bisphosphate aldolase activity"/>
    <property type="evidence" value="ECO:0007669"/>
    <property type="project" value="UniProtKB-UniRule"/>
</dbReference>
<dbReference type="GO" id="GO:0008270">
    <property type="term" value="F:zinc ion binding"/>
    <property type="evidence" value="ECO:0007669"/>
    <property type="project" value="UniProtKB-UniRule"/>
</dbReference>
<dbReference type="GO" id="GO:2001059">
    <property type="term" value="P:D-tagatose 6-phosphate catabolic process"/>
    <property type="evidence" value="ECO:0007669"/>
    <property type="project" value="UniProtKB-UniRule"/>
</dbReference>
<dbReference type="GO" id="GO:0019404">
    <property type="term" value="P:galactitol catabolic process"/>
    <property type="evidence" value="ECO:0007669"/>
    <property type="project" value="InterPro"/>
</dbReference>
<dbReference type="CDD" id="cd00947">
    <property type="entry name" value="TBP_aldolase_IIB"/>
    <property type="match status" value="1"/>
</dbReference>
<dbReference type="FunFam" id="3.20.20.70:FF:000043">
    <property type="entry name" value="D-tagatose-1,6-bisphosphate aldolase subunit GatY"/>
    <property type="match status" value="1"/>
</dbReference>
<dbReference type="Gene3D" id="3.20.20.70">
    <property type="entry name" value="Aldolase class I"/>
    <property type="match status" value="1"/>
</dbReference>
<dbReference type="HAMAP" id="MF_01294">
    <property type="entry name" value="TagBP_aldolase_GatY"/>
    <property type="match status" value="1"/>
</dbReference>
<dbReference type="InterPro" id="IPR013785">
    <property type="entry name" value="Aldolase_TIM"/>
</dbReference>
<dbReference type="InterPro" id="IPR050246">
    <property type="entry name" value="Class_II_FBP_aldolase"/>
</dbReference>
<dbReference type="InterPro" id="IPR000771">
    <property type="entry name" value="FBA_II"/>
</dbReference>
<dbReference type="InterPro" id="IPR011288">
    <property type="entry name" value="TagBP_ald_KbaY/GatY"/>
</dbReference>
<dbReference type="InterPro" id="IPR023955">
    <property type="entry name" value="TagBP_aldolase_GatY"/>
</dbReference>
<dbReference type="NCBIfam" id="TIGR00167">
    <property type="entry name" value="cbbA"/>
    <property type="match status" value="1"/>
</dbReference>
<dbReference type="NCBIfam" id="NF006626">
    <property type="entry name" value="PRK09195.1"/>
    <property type="match status" value="1"/>
</dbReference>
<dbReference type="NCBIfam" id="NF009374">
    <property type="entry name" value="PRK12737.1"/>
    <property type="match status" value="1"/>
</dbReference>
<dbReference type="NCBIfam" id="TIGR01858">
    <property type="entry name" value="tag_bisphos_ald"/>
    <property type="match status" value="1"/>
</dbReference>
<dbReference type="PANTHER" id="PTHR30304">
    <property type="entry name" value="D-TAGATOSE-1,6-BISPHOSPHATE ALDOLASE"/>
    <property type="match status" value="1"/>
</dbReference>
<dbReference type="PANTHER" id="PTHR30304:SF0">
    <property type="entry name" value="D-TAGATOSE-1,6-BISPHOSPHATE ALDOLASE SUBUNIT GATY-RELATED"/>
    <property type="match status" value="1"/>
</dbReference>
<dbReference type="Pfam" id="PF01116">
    <property type="entry name" value="F_bP_aldolase"/>
    <property type="match status" value="1"/>
</dbReference>
<dbReference type="PIRSF" id="PIRSF001359">
    <property type="entry name" value="F_bP_aldolase_II"/>
    <property type="match status" value="1"/>
</dbReference>
<dbReference type="SUPFAM" id="SSF51569">
    <property type="entry name" value="Aldolase"/>
    <property type="match status" value="1"/>
</dbReference>
<dbReference type="PROSITE" id="PS00602">
    <property type="entry name" value="ALDOLASE_CLASS_II_1"/>
    <property type="match status" value="1"/>
</dbReference>
<dbReference type="PROSITE" id="PS00806">
    <property type="entry name" value="ALDOLASE_CLASS_II_2"/>
    <property type="match status" value="1"/>
</dbReference>
<comment type="function">
    <text evidence="1">Catalytic subunit of the tagatose-1,6-bisphosphate aldolase GatYZ, which catalyzes the reversible aldol condensation of dihydroxyacetone phosphate (DHAP or glycerone-phosphate) with glyceraldehyde 3-phosphate (G3P) to produce tagatose 1,6-bisphosphate (TBP). Requires GatZ subunit for full activity and stability. Is involved in the catabolism of galactitol.</text>
</comment>
<comment type="catalytic activity">
    <reaction evidence="1">
        <text>D-tagatofuranose 1,6-bisphosphate = D-glyceraldehyde 3-phosphate + dihydroxyacetone phosphate</text>
        <dbReference type="Rhea" id="RHEA:22948"/>
        <dbReference type="ChEBI" id="CHEBI:57642"/>
        <dbReference type="ChEBI" id="CHEBI:58694"/>
        <dbReference type="ChEBI" id="CHEBI:59776"/>
        <dbReference type="EC" id="4.1.2.40"/>
    </reaction>
</comment>
<comment type="cofactor">
    <cofactor evidence="1">
        <name>Zn(2+)</name>
        <dbReference type="ChEBI" id="CHEBI:29105"/>
    </cofactor>
    <text evidence="1">Binds 1 zinc ion per subunit.</text>
</comment>
<comment type="pathway">
    <text evidence="1">Carbohydrate metabolism; D-tagatose 6-phosphate degradation; D-glyceraldehyde 3-phosphate and glycerone phosphate from D-tagatose 6-phosphate: step 2/2.</text>
</comment>
<comment type="subunit">
    <text evidence="1">Forms a complex with GatZ.</text>
</comment>
<comment type="similarity">
    <text evidence="1">Belongs to the class II fructose-bisphosphate aldolase family. TagBP aldolase GatY subfamily.</text>
</comment>
<gene>
    <name evidence="1" type="primary">gatY</name>
    <name type="ordered locus">EcSMS35_0968</name>
</gene>
<sequence>MYVVSTKQMLNNAQRGGYAVPAFNIHNLETMQVVVETAASMHAPVIIAGTPGTFTHAGTENLMALVSAMAKQYHHPLAIHLDHHTKFDDIAQKVRSGVRSVMIDASHLPFAQNISRVKEVVDFCHRFDVSVEAELGQLGGQEDDVQVNEADALYTNPVQAREFAEATGIDSLAVAIGTAHGMYASAPALDFSRLENIRQWVNLPLVLHGASGLSTKDIQQTIKLGICKINVATELKNAFSQALKNYLTEHPEATDPRDYLQSAKFAMRDVVSKVIADCGCEGRA</sequence>
<accession>B1LN92</accession>
<name>GATY_ECOSM</name>
<proteinExistence type="inferred from homology"/>
<evidence type="ECO:0000255" key="1">
    <source>
        <dbReference type="HAMAP-Rule" id="MF_01294"/>
    </source>
</evidence>
<organism>
    <name type="scientific">Escherichia coli (strain SMS-3-5 / SECEC)</name>
    <dbReference type="NCBI Taxonomy" id="439855"/>
    <lineage>
        <taxon>Bacteria</taxon>
        <taxon>Pseudomonadati</taxon>
        <taxon>Pseudomonadota</taxon>
        <taxon>Gammaproteobacteria</taxon>
        <taxon>Enterobacterales</taxon>
        <taxon>Enterobacteriaceae</taxon>
        <taxon>Escherichia</taxon>
    </lineage>
</organism>
<reference key="1">
    <citation type="journal article" date="2008" name="J. Bacteriol.">
        <title>Insights into the environmental resistance gene pool from the genome sequence of the multidrug-resistant environmental isolate Escherichia coli SMS-3-5.</title>
        <authorList>
            <person name="Fricke W.F."/>
            <person name="Wright M.S."/>
            <person name="Lindell A.H."/>
            <person name="Harkins D.M."/>
            <person name="Baker-Austin C."/>
            <person name="Ravel J."/>
            <person name="Stepanauskas R."/>
        </authorList>
    </citation>
    <scope>NUCLEOTIDE SEQUENCE [LARGE SCALE GENOMIC DNA]</scope>
    <source>
        <strain>SMS-3-5 / SECEC</strain>
    </source>
</reference>
<feature type="chain" id="PRO_0000355340" description="D-tagatose-1,6-bisphosphate aldolase subunit GatY">
    <location>
        <begin position="1"/>
        <end position="284"/>
    </location>
</feature>
<feature type="active site" description="Proton donor" evidence="1">
    <location>
        <position position="82"/>
    </location>
</feature>
<feature type="binding site" evidence="1">
    <location>
        <position position="83"/>
    </location>
    <ligand>
        <name>Zn(2+)</name>
        <dbReference type="ChEBI" id="CHEBI:29105"/>
        <note>catalytic</note>
    </ligand>
</feature>
<feature type="binding site" evidence="1">
    <location>
        <position position="180"/>
    </location>
    <ligand>
        <name>Zn(2+)</name>
        <dbReference type="ChEBI" id="CHEBI:29105"/>
        <note>catalytic</note>
    </ligand>
</feature>
<feature type="binding site" evidence="1">
    <location>
        <position position="181"/>
    </location>
    <ligand>
        <name>dihydroxyacetone phosphate</name>
        <dbReference type="ChEBI" id="CHEBI:57642"/>
    </ligand>
</feature>
<feature type="binding site" evidence="1">
    <location>
        <position position="208"/>
    </location>
    <ligand>
        <name>Zn(2+)</name>
        <dbReference type="ChEBI" id="CHEBI:29105"/>
        <note>catalytic</note>
    </ligand>
</feature>
<feature type="binding site" evidence="1">
    <location>
        <begin position="209"/>
        <end position="211"/>
    </location>
    <ligand>
        <name>dihydroxyacetone phosphate</name>
        <dbReference type="ChEBI" id="CHEBI:57642"/>
    </ligand>
</feature>
<feature type="binding site" evidence="1">
    <location>
        <begin position="230"/>
        <end position="233"/>
    </location>
    <ligand>
        <name>dihydroxyacetone phosphate</name>
        <dbReference type="ChEBI" id="CHEBI:57642"/>
    </ligand>
</feature>
<keyword id="KW-0298">Galactitol metabolism</keyword>
<keyword id="KW-0456">Lyase</keyword>
<keyword id="KW-0479">Metal-binding</keyword>
<keyword id="KW-0862">Zinc</keyword>